<evidence type="ECO:0000255" key="1">
    <source>
        <dbReference type="HAMAP-Rule" id="MF_01031"/>
    </source>
</evidence>
<sequence>MSGFKQHTGLVVPLDTANIDTDAIIPKQFLQKVNRTGFGKHLFHDWRFLDDAGQQPNPEFVMNAPRYQGASILLARENFGCGSSREHAPWALADYGIQVMIAPSFADIFYGNSINNQMIPVRLTDIEVDEIFQFVEANEGAEVAVDLEAMLVSANGKQYSFEIDEFRRHCLLNGLDNIGLTLQHADKISEYEAKIPNFLK</sequence>
<protein>
    <recommendedName>
        <fullName evidence="1">3-isopropylmalate dehydratase small subunit</fullName>
        <ecNumber evidence="1">4.2.1.33</ecNumber>
    </recommendedName>
    <alternativeName>
        <fullName evidence="1">Alpha-IPM isomerase</fullName>
        <shortName evidence="1">IPMI</shortName>
    </alternativeName>
    <alternativeName>
        <fullName evidence="1">Isopropylmalate isomerase</fullName>
    </alternativeName>
</protein>
<dbReference type="EC" id="4.2.1.33" evidence="1"/>
<dbReference type="EMBL" id="FM178379">
    <property type="protein sequence ID" value="CAQ78059.1"/>
    <property type="molecule type" value="Genomic_DNA"/>
</dbReference>
<dbReference type="RefSeq" id="WP_012549201.1">
    <property type="nucleotide sequence ID" value="NC_011312.1"/>
</dbReference>
<dbReference type="SMR" id="B6ELJ7"/>
<dbReference type="KEGG" id="vsa:VSAL_I0374"/>
<dbReference type="eggNOG" id="COG0066">
    <property type="taxonomic scope" value="Bacteria"/>
</dbReference>
<dbReference type="HOGENOM" id="CLU_081378_0_3_6"/>
<dbReference type="UniPathway" id="UPA00048">
    <property type="reaction ID" value="UER00071"/>
</dbReference>
<dbReference type="Proteomes" id="UP000001730">
    <property type="component" value="Chromosome 1"/>
</dbReference>
<dbReference type="GO" id="GO:0009316">
    <property type="term" value="C:3-isopropylmalate dehydratase complex"/>
    <property type="evidence" value="ECO:0007669"/>
    <property type="project" value="InterPro"/>
</dbReference>
<dbReference type="GO" id="GO:0003861">
    <property type="term" value="F:3-isopropylmalate dehydratase activity"/>
    <property type="evidence" value="ECO:0007669"/>
    <property type="project" value="UniProtKB-UniRule"/>
</dbReference>
<dbReference type="GO" id="GO:0009098">
    <property type="term" value="P:L-leucine biosynthetic process"/>
    <property type="evidence" value="ECO:0007669"/>
    <property type="project" value="UniProtKB-UniRule"/>
</dbReference>
<dbReference type="CDD" id="cd01577">
    <property type="entry name" value="IPMI_Swivel"/>
    <property type="match status" value="1"/>
</dbReference>
<dbReference type="FunFam" id="3.20.19.10:FF:000003">
    <property type="entry name" value="3-isopropylmalate dehydratase small subunit"/>
    <property type="match status" value="1"/>
</dbReference>
<dbReference type="Gene3D" id="3.20.19.10">
    <property type="entry name" value="Aconitase, domain 4"/>
    <property type="match status" value="1"/>
</dbReference>
<dbReference type="HAMAP" id="MF_01031">
    <property type="entry name" value="LeuD_type1"/>
    <property type="match status" value="1"/>
</dbReference>
<dbReference type="InterPro" id="IPR004431">
    <property type="entry name" value="3-IsopropMal_deHydase_ssu"/>
</dbReference>
<dbReference type="InterPro" id="IPR015928">
    <property type="entry name" value="Aconitase/3IPM_dehydase_swvl"/>
</dbReference>
<dbReference type="InterPro" id="IPR000573">
    <property type="entry name" value="AconitaseA/IPMdHydase_ssu_swvl"/>
</dbReference>
<dbReference type="InterPro" id="IPR033940">
    <property type="entry name" value="IPMI_Swivel"/>
</dbReference>
<dbReference type="InterPro" id="IPR050075">
    <property type="entry name" value="LeuD"/>
</dbReference>
<dbReference type="NCBIfam" id="TIGR00171">
    <property type="entry name" value="leuD"/>
    <property type="match status" value="1"/>
</dbReference>
<dbReference type="NCBIfam" id="NF002458">
    <property type="entry name" value="PRK01641.1"/>
    <property type="match status" value="1"/>
</dbReference>
<dbReference type="PANTHER" id="PTHR43345:SF5">
    <property type="entry name" value="3-ISOPROPYLMALATE DEHYDRATASE SMALL SUBUNIT"/>
    <property type="match status" value="1"/>
</dbReference>
<dbReference type="PANTHER" id="PTHR43345">
    <property type="entry name" value="3-ISOPROPYLMALATE DEHYDRATASE SMALL SUBUNIT 2-RELATED-RELATED"/>
    <property type="match status" value="1"/>
</dbReference>
<dbReference type="Pfam" id="PF00694">
    <property type="entry name" value="Aconitase_C"/>
    <property type="match status" value="1"/>
</dbReference>
<dbReference type="SUPFAM" id="SSF52016">
    <property type="entry name" value="LeuD/IlvD-like"/>
    <property type="match status" value="1"/>
</dbReference>
<feature type="chain" id="PRO_1000135785" description="3-isopropylmalate dehydratase small subunit">
    <location>
        <begin position="1"/>
        <end position="200"/>
    </location>
</feature>
<organism>
    <name type="scientific">Aliivibrio salmonicida (strain LFI1238)</name>
    <name type="common">Vibrio salmonicida (strain LFI1238)</name>
    <dbReference type="NCBI Taxonomy" id="316275"/>
    <lineage>
        <taxon>Bacteria</taxon>
        <taxon>Pseudomonadati</taxon>
        <taxon>Pseudomonadota</taxon>
        <taxon>Gammaproteobacteria</taxon>
        <taxon>Vibrionales</taxon>
        <taxon>Vibrionaceae</taxon>
        <taxon>Aliivibrio</taxon>
    </lineage>
</organism>
<proteinExistence type="inferred from homology"/>
<name>LEUD_ALISL</name>
<accession>B6ELJ7</accession>
<gene>
    <name evidence="1" type="primary">leuD</name>
    <name type="ordered locus">VSAL_I0374</name>
</gene>
<reference key="1">
    <citation type="journal article" date="2008" name="BMC Genomics">
        <title>The genome sequence of the fish pathogen Aliivibrio salmonicida strain LFI1238 shows extensive evidence of gene decay.</title>
        <authorList>
            <person name="Hjerde E."/>
            <person name="Lorentzen M.S."/>
            <person name="Holden M.T."/>
            <person name="Seeger K."/>
            <person name="Paulsen S."/>
            <person name="Bason N."/>
            <person name="Churcher C."/>
            <person name="Harris D."/>
            <person name="Norbertczak H."/>
            <person name="Quail M.A."/>
            <person name="Sanders S."/>
            <person name="Thurston S."/>
            <person name="Parkhill J."/>
            <person name="Willassen N.P."/>
            <person name="Thomson N.R."/>
        </authorList>
    </citation>
    <scope>NUCLEOTIDE SEQUENCE [LARGE SCALE GENOMIC DNA]</scope>
    <source>
        <strain>LFI1238</strain>
    </source>
</reference>
<keyword id="KW-0028">Amino-acid biosynthesis</keyword>
<keyword id="KW-0100">Branched-chain amino acid biosynthesis</keyword>
<keyword id="KW-0432">Leucine biosynthesis</keyword>
<keyword id="KW-0456">Lyase</keyword>
<comment type="function">
    <text evidence="1">Catalyzes the isomerization between 2-isopropylmalate and 3-isopropylmalate, via the formation of 2-isopropylmaleate.</text>
</comment>
<comment type="catalytic activity">
    <reaction evidence="1">
        <text>(2R,3S)-3-isopropylmalate = (2S)-2-isopropylmalate</text>
        <dbReference type="Rhea" id="RHEA:32287"/>
        <dbReference type="ChEBI" id="CHEBI:1178"/>
        <dbReference type="ChEBI" id="CHEBI:35121"/>
        <dbReference type="EC" id="4.2.1.33"/>
    </reaction>
</comment>
<comment type="pathway">
    <text evidence="1">Amino-acid biosynthesis; L-leucine biosynthesis; L-leucine from 3-methyl-2-oxobutanoate: step 2/4.</text>
</comment>
<comment type="subunit">
    <text evidence="1">Heterodimer of LeuC and LeuD.</text>
</comment>
<comment type="similarity">
    <text evidence="1">Belongs to the LeuD family. LeuD type 1 subfamily.</text>
</comment>